<gene>
    <name type="primary">pfa3</name>
    <name type="ORF">SPBC2F12.15c</name>
</gene>
<accession>O14345</accession>
<evidence type="ECO:0000250" key="1">
    <source>
        <dbReference type="UniProtKB" id="P42836"/>
    </source>
</evidence>
<evidence type="ECO:0000255" key="2"/>
<evidence type="ECO:0000255" key="3">
    <source>
        <dbReference type="PROSITE-ProRule" id="PRU00067"/>
    </source>
</evidence>
<evidence type="ECO:0000269" key="4">
    <source>
    </source>
</evidence>
<evidence type="ECO:0000305" key="5"/>
<comment type="function">
    <text evidence="1">Palmitoyltransferase specific for VAC8. Palmitoylates VAC8 at one or more of its N-terminal cysteine residues, which is required for its proper membrane localization.</text>
</comment>
<comment type="catalytic activity">
    <reaction evidence="1">
        <text>L-cysteinyl-[protein] + hexadecanoyl-CoA = S-hexadecanoyl-L-cysteinyl-[protein] + CoA</text>
        <dbReference type="Rhea" id="RHEA:36683"/>
        <dbReference type="Rhea" id="RHEA-COMP:10131"/>
        <dbReference type="Rhea" id="RHEA-COMP:11032"/>
        <dbReference type="ChEBI" id="CHEBI:29950"/>
        <dbReference type="ChEBI" id="CHEBI:57287"/>
        <dbReference type="ChEBI" id="CHEBI:57379"/>
        <dbReference type="ChEBI" id="CHEBI:74151"/>
        <dbReference type="EC" id="2.3.1.225"/>
    </reaction>
</comment>
<comment type="subcellular location">
    <subcellularLocation>
        <location evidence="4">Vacuole membrane</location>
        <topology evidence="4">Multi-pass membrane protein</topology>
    </subcellularLocation>
    <subcellularLocation>
        <location evidence="4">Golgi apparatus membrane</location>
        <topology evidence="4">Multi-pass membrane protein</topology>
    </subcellularLocation>
</comment>
<comment type="domain">
    <text evidence="1">The DHHC domain is required for palmitoyltransferase activity.</text>
</comment>
<comment type="PTM">
    <text evidence="1">Autopalmitoylated.</text>
</comment>
<comment type="similarity">
    <text evidence="5">Belongs to the DHHC palmitoyltransferase family. PFA3 subfamily.</text>
</comment>
<name>PFA3_SCHPO</name>
<feature type="chain" id="PRO_0000116499" description="Palmitoyltransferase pfa3">
    <location>
        <begin position="1"/>
        <end position="329"/>
    </location>
</feature>
<feature type="transmembrane region" description="Helical" evidence="2">
    <location>
        <begin position="14"/>
        <end position="34"/>
    </location>
</feature>
<feature type="transmembrane region" description="Helical" evidence="2">
    <location>
        <begin position="49"/>
        <end position="69"/>
    </location>
</feature>
<feature type="transmembrane region" description="Helical" evidence="2">
    <location>
        <begin position="141"/>
        <end position="161"/>
    </location>
</feature>
<feature type="transmembrane region" description="Helical" evidence="2">
    <location>
        <begin position="177"/>
        <end position="197"/>
    </location>
</feature>
<feature type="transmembrane region" description="Helical" evidence="2">
    <location>
        <begin position="243"/>
        <end position="263"/>
    </location>
</feature>
<feature type="domain" description="DHHC" evidence="3">
    <location>
        <begin position="97"/>
        <end position="147"/>
    </location>
</feature>
<organism>
    <name type="scientific">Schizosaccharomyces pombe (strain 972 / ATCC 24843)</name>
    <name type="common">Fission yeast</name>
    <dbReference type="NCBI Taxonomy" id="284812"/>
    <lineage>
        <taxon>Eukaryota</taxon>
        <taxon>Fungi</taxon>
        <taxon>Dikarya</taxon>
        <taxon>Ascomycota</taxon>
        <taxon>Taphrinomycotina</taxon>
        <taxon>Schizosaccharomycetes</taxon>
        <taxon>Schizosaccharomycetales</taxon>
        <taxon>Schizosaccharomycetaceae</taxon>
        <taxon>Schizosaccharomyces</taxon>
    </lineage>
</organism>
<reference key="1">
    <citation type="journal article" date="2002" name="Nature">
        <title>The genome sequence of Schizosaccharomyces pombe.</title>
        <authorList>
            <person name="Wood V."/>
            <person name="Gwilliam R."/>
            <person name="Rajandream M.A."/>
            <person name="Lyne M.H."/>
            <person name="Lyne R."/>
            <person name="Stewart A."/>
            <person name="Sgouros J.G."/>
            <person name="Peat N."/>
            <person name="Hayles J."/>
            <person name="Baker S.G."/>
            <person name="Basham D."/>
            <person name="Bowman S."/>
            <person name="Brooks K."/>
            <person name="Brown D."/>
            <person name="Brown S."/>
            <person name="Chillingworth T."/>
            <person name="Churcher C.M."/>
            <person name="Collins M."/>
            <person name="Connor R."/>
            <person name="Cronin A."/>
            <person name="Davis P."/>
            <person name="Feltwell T."/>
            <person name="Fraser A."/>
            <person name="Gentles S."/>
            <person name="Goble A."/>
            <person name="Hamlin N."/>
            <person name="Harris D.E."/>
            <person name="Hidalgo J."/>
            <person name="Hodgson G."/>
            <person name="Holroyd S."/>
            <person name="Hornsby T."/>
            <person name="Howarth S."/>
            <person name="Huckle E.J."/>
            <person name="Hunt S."/>
            <person name="Jagels K."/>
            <person name="James K.D."/>
            <person name="Jones L."/>
            <person name="Jones M."/>
            <person name="Leather S."/>
            <person name="McDonald S."/>
            <person name="McLean J."/>
            <person name="Mooney P."/>
            <person name="Moule S."/>
            <person name="Mungall K.L."/>
            <person name="Murphy L.D."/>
            <person name="Niblett D."/>
            <person name="Odell C."/>
            <person name="Oliver K."/>
            <person name="O'Neil S."/>
            <person name="Pearson D."/>
            <person name="Quail M.A."/>
            <person name="Rabbinowitsch E."/>
            <person name="Rutherford K.M."/>
            <person name="Rutter S."/>
            <person name="Saunders D."/>
            <person name="Seeger K."/>
            <person name="Sharp S."/>
            <person name="Skelton J."/>
            <person name="Simmonds M.N."/>
            <person name="Squares R."/>
            <person name="Squares S."/>
            <person name="Stevens K."/>
            <person name="Taylor K."/>
            <person name="Taylor R.G."/>
            <person name="Tivey A."/>
            <person name="Walsh S.V."/>
            <person name="Warren T."/>
            <person name="Whitehead S."/>
            <person name="Woodward J.R."/>
            <person name="Volckaert G."/>
            <person name="Aert R."/>
            <person name="Robben J."/>
            <person name="Grymonprez B."/>
            <person name="Weltjens I."/>
            <person name="Vanstreels E."/>
            <person name="Rieger M."/>
            <person name="Schaefer M."/>
            <person name="Mueller-Auer S."/>
            <person name="Gabel C."/>
            <person name="Fuchs M."/>
            <person name="Duesterhoeft A."/>
            <person name="Fritzc C."/>
            <person name="Holzer E."/>
            <person name="Moestl D."/>
            <person name="Hilbert H."/>
            <person name="Borzym K."/>
            <person name="Langer I."/>
            <person name="Beck A."/>
            <person name="Lehrach H."/>
            <person name="Reinhardt R."/>
            <person name="Pohl T.M."/>
            <person name="Eger P."/>
            <person name="Zimmermann W."/>
            <person name="Wedler H."/>
            <person name="Wambutt R."/>
            <person name="Purnelle B."/>
            <person name="Goffeau A."/>
            <person name="Cadieu E."/>
            <person name="Dreano S."/>
            <person name="Gloux S."/>
            <person name="Lelaure V."/>
            <person name="Mottier S."/>
            <person name="Galibert F."/>
            <person name="Aves S.J."/>
            <person name="Xiang Z."/>
            <person name="Hunt C."/>
            <person name="Moore K."/>
            <person name="Hurst S.M."/>
            <person name="Lucas M."/>
            <person name="Rochet M."/>
            <person name="Gaillardin C."/>
            <person name="Tallada V.A."/>
            <person name="Garzon A."/>
            <person name="Thode G."/>
            <person name="Daga R.R."/>
            <person name="Cruzado L."/>
            <person name="Jimenez J."/>
            <person name="Sanchez M."/>
            <person name="del Rey F."/>
            <person name="Benito J."/>
            <person name="Dominguez A."/>
            <person name="Revuelta J.L."/>
            <person name="Moreno S."/>
            <person name="Armstrong J."/>
            <person name="Forsburg S.L."/>
            <person name="Cerutti L."/>
            <person name="Lowe T."/>
            <person name="McCombie W.R."/>
            <person name="Paulsen I."/>
            <person name="Potashkin J."/>
            <person name="Shpakovski G.V."/>
            <person name="Ussery D."/>
            <person name="Barrell B.G."/>
            <person name="Nurse P."/>
        </authorList>
    </citation>
    <scope>NUCLEOTIDE SEQUENCE [LARGE SCALE GENOMIC DNA]</scope>
    <source>
        <strain>972 / ATCC 24843</strain>
    </source>
</reference>
<reference key="2">
    <citation type="journal article" date="2006" name="Nat. Biotechnol.">
        <title>ORFeome cloning and global analysis of protein localization in the fission yeast Schizosaccharomyces pombe.</title>
        <authorList>
            <person name="Matsuyama A."/>
            <person name="Arai R."/>
            <person name="Yashiroda Y."/>
            <person name="Shirai A."/>
            <person name="Kamata A."/>
            <person name="Sekido S."/>
            <person name="Kobayashi Y."/>
            <person name="Hashimoto A."/>
            <person name="Hamamoto M."/>
            <person name="Hiraoka Y."/>
            <person name="Horinouchi S."/>
            <person name="Yoshida M."/>
        </authorList>
    </citation>
    <scope>SUBCELLULAR LOCATION [LARGE SCALE ANALYSIS]</scope>
</reference>
<dbReference type="EC" id="2.3.1.225" evidence="1"/>
<dbReference type="EMBL" id="CU329671">
    <property type="protein sequence ID" value="CAB10162.1"/>
    <property type="molecule type" value="Genomic_DNA"/>
</dbReference>
<dbReference type="PIR" id="T40126">
    <property type="entry name" value="T40126"/>
</dbReference>
<dbReference type="RefSeq" id="NP_595701.1">
    <property type="nucleotide sequence ID" value="NM_001021598.2"/>
</dbReference>
<dbReference type="SMR" id="O14345"/>
<dbReference type="BioGRID" id="276991">
    <property type="interactions" value="39"/>
</dbReference>
<dbReference type="FunCoup" id="O14345">
    <property type="interactions" value="195"/>
</dbReference>
<dbReference type="STRING" id="284812.O14345"/>
<dbReference type="iPTMnet" id="O14345"/>
<dbReference type="PaxDb" id="4896-SPBC2F12.15c.1"/>
<dbReference type="EnsemblFungi" id="SPBC2F12.15c.1">
    <property type="protein sequence ID" value="SPBC2F12.15c.1:pep"/>
    <property type="gene ID" value="SPBC2F12.15c"/>
</dbReference>
<dbReference type="GeneID" id="2540463"/>
<dbReference type="KEGG" id="spo:2540463"/>
<dbReference type="PomBase" id="SPBC2F12.15c">
    <property type="gene designation" value="pfa3"/>
</dbReference>
<dbReference type="VEuPathDB" id="FungiDB:SPBC2F12.15c"/>
<dbReference type="eggNOG" id="KOG1315">
    <property type="taxonomic scope" value="Eukaryota"/>
</dbReference>
<dbReference type="HOGENOM" id="CLU_845091_0_0_1"/>
<dbReference type="InParanoid" id="O14345"/>
<dbReference type="OMA" id="FQTEHEY"/>
<dbReference type="PhylomeDB" id="O14345"/>
<dbReference type="PRO" id="PR:O14345"/>
<dbReference type="Proteomes" id="UP000002485">
    <property type="component" value="Chromosome II"/>
</dbReference>
<dbReference type="GO" id="GO:0005783">
    <property type="term" value="C:endoplasmic reticulum"/>
    <property type="evidence" value="ECO:0007005"/>
    <property type="project" value="PomBase"/>
</dbReference>
<dbReference type="GO" id="GO:0000324">
    <property type="term" value="C:fungal-type vacuole"/>
    <property type="evidence" value="ECO:0000314"/>
    <property type="project" value="PomBase"/>
</dbReference>
<dbReference type="GO" id="GO:0000329">
    <property type="term" value="C:fungal-type vacuole membrane"/>
    <property type="evidence" value="ECO:0000266"/>
    <property type="project" value="PomBase"/>
</dbReference>
<dbReference type="GO" id="GO:0005794">
    <property type="term" value="C:Golgi apparatus"/>
    <property type="evidence" value="ECO:0007005"/>
    <property type="project" value="PomBase"/>
</dbReference>
<dbReference type="GO" id="GO:0000139">
    <property type="term" value="C:Golgi membrane"/>
    <property type="evidence" value="ECO:0007669"/>
    <property type="project" value="UniProtKB-SubCell"/>
</dbReference>
<dbReference type="GO" id="GO:0019706">
    <property type="term" value="F:protein-cysteine S-palmitoyltransferase activity"/>
    <property type="evidence" value="ECO:0000318"/>
    <property type="project" value="GO_Central"/>
</dbReference>
<dbReference type="GO" id="GO:0006612">
    <property type="term" value="P:protein targeting to membrane"/>
    <property type="evidence" value="ECO:0000318"/>
    <property type="project" value="GO_Central"/>
</dbReference>
<dbReference type="GO" id="GO:0042144">
    <property type="term" value="P:vacuole fusion, non-autophagic"/>
    <property type="evidence" value="ECO:0000266"/>
    <property type="project" value="PomBase"/>
</dbReference>
<dbReference type="InterPro" id="IPR001594">
    <property type="entry name" value="Palmitoyltrfase_DHHC"/>
</dbReference>
<dbReference type="InterPro" id="IPR039859">
    <property type="entry name" value="PFA4/ZDH16/20/ERF2-like"/>
</dbReference>
<dbReference type="PANTHER" id="PTHR12246">
    <property type="entry name" value="PALMITOYLTRANSFERASE ZDHHC16"/>
    <property type="match status" value="1"/>
</dbReference>
<dbReference type="Pfam" id="PF01529">
    <property type="entry name" value="DHHC"/>
    <property type="match status" value="1"/>
</dbReference>
<dbReference type="PROSITE" id="PS50216">
    <property type="entry name" value="DHHC"/>
    <property type="match status" value="1"/>
</dbReference>
<proteinExistence type="inferred from homology"/>
<keyword id="KW-0012">Acyltransferase</keyword>
<keyword id="KW-0333">Golgi apparatus</keyword>
<keyword id="KW-0449">Lipoprotein</keyword>
<keyword id="KW-0472">Membrane</keyword>
<keyword id="KW-0564">Palmitate</keyword>
<keyword id="KW-1185">Reference proteome</keyword>
<keyword id="KW-0808">Transferase</keyword>
<keyword id="KW-0812">Transmembrane</keyword>
<keyword id="KW-1133">Transmembrane helix</keyword>
<keyword id="KW-0926">Vacuole</keyword>
<protein>
    <recommendedName>
        <fullName>Palmitoyltransferase pfa3</fullName>
        <ecNumber evidence="1">2.3.1.225</ecNumber>
    </recommendedName>
    <alternativeName>
        <fullName>Protein fatty acyltransferase 3</fullName>
    </alternativeName>
</protein>
<sequence length="329" mass="38091">MNLIHKVSTICQCVLVILAKYCMQIIALSLMSGVQWLAWGIYKINKNRVGIIILFLYIMIVTCYVLTNLTPPGSPSETSFDPNSTRQYMTLQNGKSRFCEKCQEYKCDRSHHCSQCNKCILRMDHHCMWFKNCVGFRNHKFFFLECFYLNLYSICVLYSTFVAITKTFTAEGANISAIYLVFWGFLFAFAVGMSIVMTAFTFYHTSLLIHNLSTLESMSSSWSRYTHSTQPFNVGWYENWCQIMGKSPFLWLLPFPNSIGEGVEYPLNANALPYLPQTEEKNDKLYKSSVPASIAGAEGWSSDEEQYAMKNRRWNPHMGQYEWIEDFLV</sequence>